<gene>
    <name type="primary">mch1</name>
    <name type="ORF">AFUA_5G13230</name>
</gene>
<comment type="function">
    <text evidence="1">Probable transporter.</text>
</comment>
<comment type="subcellular location">
    <subcellularLocation>
        <location evidence="1">Vacuole membrane</location>
        <topology evidence="1">Multi-pass membrane protein</topology>
    </subcellularLocation>
</comment>
<comment type="similarity">
    <text evidence="3">Belongs to the major facilitator superfamily.</text>
</comment>
<sequence length="619" mass="67442">MAGPDQHYEPAIDKRDFDDHRPLLHDIDTGIDGTGDGRLRSDSRLSAFRNLDGGSDGLLNDVVDEIVERDRRKMAMEVMRVCSFAVGVISCLGAGSITAFSLYGPLFLTRLHYSQLQVNAVSIAAEISMYLPVPLFGYLCDRYTPSPLALLSGLVFGGGYLLAAFAYRSGPLPEAGGEGWPPWVMVVAFVAIGTATSCMYLAAVTTCAKNFGRGKHKGIMLAVPIAGFGLSGMWQSQVATYLLCERREDGSRGDVDVFRYFLFLALFLFCLGVIGTFGLRIVDEEEDQYIDEAVEELERSGLLEESEFFRPRSEVQAAYGTFSDAADGDAPGPELSLTLSEEEREAARLEKEREEEERRKKNWLLNFETRLFLQDQTMWWLAVGFFLVTGPGEAYINNLGTIIQTLTPELHPPNAPSPAGLPSTHVTIIALTSTIARLLTGSLSDFFAPPATHLFPANIESGRRSSQSGPTAKRPTLSRLAFLLPSALLLSLGYLLLSSPLPLQHPGLSHVTTALIGLGYGSAFSLVPIIISVVWGVENFGTNWGIVAMVPAAGAAMWGVIYSRGYQDATDGGNGSPDGQCHGWRCYGFWAVGCTLSVWVAVVAWILAWRGWRRRGVVV</sequence>
<protein>
    <recommendedName>
        <fullName>Probable transporter mch1</fullName>
    </recommendedName>
</protein>
<reference key="1">
    <citation type="journal article" date="2005" name="Nature">
        <title>Genomic sequence of the pathogenic and allergenic filamentous fungus Aspergillus fumigatus.</title>
        <authorList>
            <person name="Nierman W.C."/>
            <person name="Pain A."/>
            <person name="Anderson M.J."/>
            <person name="Wortman J.R."/>
            <person name="Kim H.S."/>
            <person name="Arroyo J."/>
            <person name="Berriman M."/>
            <person name="Abe K."/>
            <person name="Archer D.B."/>
            <person name="Bermejo C."/>
            <person name="Bennett J.W."/>
            <person name="Bowyer P."/>
            <person name="Chen D."/>
            <person name="Collins M."/>
            <person name="Coulsen R."/>
            <person name="Davies R."/>
            <person name="Dyer P.S."/>
            <person name="Farman M.L."/>
            <person name="Fedorova N."/>
            <person name="Fedorova N.D."/>
            <person name="Feldblyum T.V."/>
            <person name="Fischer R."/>
            <person name="Fosker N."/>
            <person name="Fraser A."/>
            <person name="Garcia J.L."/>
            <person name="Garcia M.J."/>
            <person name="Goble A."/>
            <person name="Goldman G.H."/>
            <person name="Gomi K."/>
            <person name="Griffith-Jones S."/>
            <person name="Gwilliam R."/>
            <person name="Haas B.J."/>
            <person name="Haas H."/>
            <person name="Harris D.E."/>
            <person name="Horiuchi H."/>
            <person name="Huang J."/>
            <person name="Humphray S."/>
            <person name="Jimenez J."/>
            <person name="Keller N."/>
            <person name="Khouri H."/>
            <person name="Kitamoto K."/>
            <person name="Kobayashi T."/>
            <person name="Konzack S."/>
            <person name="Kulkarni R."/>
            <person name="Kumagai T."/>
            <person name="Lafton A."/>
            <person name="Latge J.-P."/>
            <person name="Li W."/>
            <person name="Lord A."/>
            <person name="Lu C."/>
            <person name="Majoros W.H."/>
            <person name="May G.S."/>
            <person name="Miller B.L."/>
            <person name="Mohamoud Y."/>
            <person name="Molina M."/>
            <person name="Monod M."/>
            <person name="Mouyna I."/>
            <person name="Mulligan S."/>
            <person name="Murphy L.D."/>
            <person name="O'Neil S."/>
            <person name="Paulsen I."/>
            <person name="Penalva M.A."/>
            <person name="Pertea M."/>
            <person name="Price C."/>
            <person name="Pritchard B.L."/>
            <person name="Quail M.A."/>
            <person name="Rabbinowitsch E."/>
            <person name="Rawlins N."/>
            <person name="Rajandream M.A."/>
            <person name="Reichard U."/>
            <person name="Renauld H."/>
            <person name="Robson G.D."/>
            <person name="Rodriguez de Cordoba S."/>
            <person name="Rodriguez-Pena J.M."/>
            <person name="Ronning C.M."/>
            <person name="Rutter S."/>
            <person name="Salzberg S.L."/>
            <person name="Sanchez M."/>
            <person name="Sanchez-Ferrero J.C."/>
            <person name="Saunders D."/>
            <person name="Seeger K."/>
            <person name="Squares R."/>
            <person name="Squares S."/>
            <person name="Takeuchi M."/>
            <person name="Tekaia F."/>
            <person name="Turner G."/>
            <person name="Vazquez de Aldana C.R."/>
            <person name="Weidman J."/>
            <person name="White O."/>
            <person name="Woodward J.R."/>
            <person name="Yu J.-H."/>
            <person name="Fraser C.M."/>
            <person name="Galagan J.E."/>
            <person name="Asai K."/>
            <person name="Machida M."/>
            <person name="Hall N."/>
            <person name="Barrell B.G."/>
            <person name="Denning D.W."/>
        </authorList>
    </citation>
    <scope>NUCLEOTIDE SEQUENCE [LARGE SCALE GENOMIC DNA]</scope>
    <source>
        <strain>ATCC MYA-4609 / CBS 101355 / FGSC A1100 / Af293</strain>
    </source>
</reference>
<dbReference type="EMBL" id="AAHF01000003">
    <property type="protein sequence ID" value="EAL91293.1"/>
    <property type="molecule type" value="Genomic_DNA"/>
</dbReference>
<dbReference type="RefSeq" id="XP_753331.1">
    <property type="nucleotide sequence ID" value="XM_748238.1"/>
</dbReference>
<dbReference type="FunCoup" id="Q4WVT3">
    <property type="interactions" value="16"/>
</dbReference>
<dbReference type="EnsemblFungi" id="EAL91293">
    <property type="protein sequence ID" value="EAL91293"/>
    <property type="gene ID" value="AFUA_5G13230"/>
</dbReference>
<dbReference type="GeneID" id="3511658"/>
<dbReference type="KEGG" id="afm:AFUA_5G13230"/>
<dbReference type="VEuPathDB" id="FungiDB:Afu5g13230"/>
<dbReference type="eggNOG" id="ENOG502QTNE">
    <property type="taxonomic scope" value="Eukaryota"/>
</dbReference>
<dbReference type="HOGENOM" id="CLU_012596_2_0_1"/>
<dbReference type="InParanoid" id="Q4WVT3"/>
<dbReference type="OMA" id="PTMWWLA"/>
<dbReference type="OrthoDB" id="199930at2759"/>
<dbReference type="Proteomes" id="UP000002530">
    <property type="component" value="Chromosome 5"/>
</dbReference>
<dbReference type="GO" id="GO:0000329">
    <property type="term" value="C:fungal-type vacuole membrane"/>
    <property type="evidence" value="ECO:0000318"/>
    <property type="project" value="GO_Central"/>
</dbReference>
<dbReference type="GO" id="GO:0022857">
    <property type="term" value="F:transmembrane transporter activity"/>
    <property type="evidence" value="ECO:0007669"/>
    <property type="project" value="InterPro"/>
</dbReference>
<dbReference type="CDD" id="cd17354">
    <property type="entry name" value="MFS_Mch1p_like"/>
    <property type="match status" value="1"/>
</dbReference>
<dbReference type="Gene3D" id="1.20.1250.20">
    <property type="entry name" value="MFS general substrate transporter like domains"/>
    <property type="match status" value="2"/>
</dbReference>
<dbReference type="InterPro" id="IPR011701">
    <property type="entry name" value="MFS"/>
</dbReference>
<dbReference type="InterPro" id="IPR036259">
    <property type="entry name" value="MFS_trans_sf"/>
</dbReference>
<dbReference type="PANTHER" id="PTHR21576:SF45">
    <property type="entry name" value="TRANSPORTER MCH1-RELATED"/>
    <property type="match status" value="1"/>
</dbReference>
<dbReference type="PANTHER" id="PTHR21576">
    <property type="entry name" value="UNCHARACTERIZED NODULIN-LIKE PROTEIN"/>
    <property type="match status" value="1"/>
</dbReference>
<dbReference type="Pfam" id="PF07690">
    <property type="entry name" value="MFS_1"/>
    <property type="match status" value="1"/>
</dbReference>
<dbReference type="SUPFAM" id="SSF103473">
    <property type="entry name" value="MFS general substrate transporter"/>
    <property type="match status" value="1"/>
</dbReference>
<organism>
    <name type="scientific">Aspergillus fumigatus (strain ATCC MYA-4609 / CBS 101355 / FGSC A1100 / Af293)</name>
    <name type="common">Neosartorya fumigata</name>
    <dbReference type="NCBI Taxonomy" id="330879"/>
    <lineage>
        <taxon>Eukaryota</taxon>
        <taxon>Fungi</taxon>
        <taxon>Dikarya</taxon>
        <taxon>Ascomycota</taxon>
        <taxon>Pezizomycotina</taxon>
        <taxon>Eurotiomycetes</taxon>
        <taxon>Eurotiomycetidae</taxon>
        <taxon>Eurotiales</taxon>
        <taxon>Aspergillaceae</taxon>
        <taxon>Aspergillus</taxon>
        <taxon>Aspergillus subgen. Fumigati</taxon>
    </lineage>
</organism>
<accession>Q4WVT3</accession>
<feature type="chain" id="PRO_0000084867" description="Probable transporter mch1">
    <location>
        <begin position="1"/>
        <end position="619"/>
    </location>
</feature>
<feature type="transmembrane region" description="Helical" evidence="2">
    <location>
        <begin position="88"/>
        <end position="108"/>
    </location>
</feature>
<feature type="transmembrane region" description="Helical" evidence="2">
    <location>
        <begin position="120"/>
        <end position="140"/>
    </location>
</feature>
<feature type="transmembrane region" description="Helical" evidence="2">
    <location>
        <begin position="147"/>
        <end position="167"/>
    </location>
</feature>
<feature type="transmembrane region" description="Helical" evidence="2">
    <location>
        <begin position="184"/>
        <end position="204"/>
    </location>
</feature>
<feature type="transmembrane region" description="Helical" evidence="2">
    <location>
        <begin position="219"/>
        <end position="239"/>
    </location>
</feature>
<feature type="transmembrane region" description="Helical" evidence="2">
    <location>
        <begin position="261"/>
        <end position="281"/>
    </location>
</feature>
<feature type="transmembrane region" description="Helical" evidence="2">
    <location>
        <begin position="377"/>
        <end position="397"/>
    </location>
</feature>
<feature type="transmembrane region" description="Helical" evidence="2">
    <location>
        <begin position="428"/>
        <end position="448"/>
    </location>
</feature>
<feature type="transmembrane region" description="Helical" evidence="2">
    <location>
        <begin position="480"/>
        <end position="500"/>
    </location>
</feature>
<feature type="transmembrane region" description="Helical" evidence="2">
    <location>
        <begin position="515"/>
        <end position="535"/>
    </location>
</feature>
<feature type="transmembrane region" description="Helical" evidence="2">
    <location>
        <begin position="541"/>
        <end position="561"/>
    </location>
</feature>
<feature type="transmembrane region" description="Helical" evidence="2">
    <location>
        <begin position="589"/>
        <end position="609"/>
    </location>
</feature>
<keyword id="KW-0472">Membrane</keyword>
<keyword id="KW-1185">Reference proteome</keyword>
<keyword id="KW-0812">Transmembrane</keyword>
<keyword id="KW-1133">Transmembrane helix</keyword>
<keyword id="KW-0813">Transport</keyword>
<keyword id="KW-0926">Vacuole</keyword>
<name>MCH1_ASPFU</name>
<evidence type="ECO:0000250" key="1"/>
<evidence type="ECO:0000255" key="2"/>
<evidence type="ECO:0000305" key="3"/>
<proteinExistence type="inferred from homology"/>